<reference key="1">
    <citation type="journal article" date="2004" name="Nat. Biotechnol.">
        <title>The genome sequence of the capnophilic rumen bacterium Mannheimia succiniciproducens.</title>
        <authorList>
            <person name="Hong S.H."/>
            <person name="Kim J.S."/>
            <person name="Lee S.Y."/>
            <person name="In Y.H."/>
            <person name="Choi S.S."/>
            <person name="Rih J.-K."/>
            <person name="Kim C.H."/>
            <person name="Jeong H."/>
            <person name="Hur C.G."/>
            <person name="Kim J.J."/>
        </authorList>
    </citation>
    <scope>NUCLEOTIDE SEQUENCE [LARGE SCALE GENOMIC DNA]</scope>
    <source>
        <strain>KCTC 0769BP / MBEL55E</strain>
    </source>
</reference>
<sequence>MSLNDYPQQVNKRRTFAIISHPDAGKTTITEKVLLYGNAIQTAGSVKGKGSQAHAKSDWMEMEKQRGISITTSVMQFPYNDCLVNLLDTPGHEDFSEDTYRTLTAVDSCLMVIDAAKGVEERTIKLMEVTRLRDTPILTFMNKLDRDIRDPMELLDEVESVLKIHCAPITWPIGCGKLFKGVYHLYKDETYLYQTGQGSTIQEVKIVKGLNNPELDNAVGDDLAQQLRDELELVKGASNEFDHELFIGGELTPVFFGTALGNFGVDHFLDGLTEWAPKPQPRQADTRIVESSEEKLTGFVFKIQANMDPKHRDRVAFMRVVSGKYEKGMKLKHVRIGKDVVISDALTFMAGDRAHAEEAYAGDIIGLHNHGTIQIGDTFTQGEDLKFTGIPNFAPELFRRIRLKDPLKQKQLLKGLVQLSEEGAVQVFRPMMNNDLIVGAVGVLQFDVVVSRLKTEYNVEAIYENVNVATARWVECADSKKFEEFKRKNEQNLALDGGDNLTYIAPTMVNLNLAQERYPDVTFFKTREH</sequence>
<evidence type="ECO:0000255" key="1">
    <source>
        <dbReference type="HAMAP-Rule" id="MF_00072"/>
    </source>
</evidence>
<proteinExistence type="inferred from homology"/>
<comment type="function">
    <text evidence="1">Increases the formation of ribosomal termination complexes and stimulates activities of RF-1 and RF-2. It binds guanine nucleotides and has strong preference for UGA stop codons. It may interact directly with the ribosome. The stimulation of RF-1 and RF-2 is significantly reduced by GTP and GDP, but not by GMP.</text>
</comment>
<comment type="subcellular location">
    <subcellularLocation>
        <location evidence="1">Cytoplasm</location>
    </subcellularLocation>
</comment>
<comment type="similarity">
    <text evidence="1">Belongs to the TRAFAC class translation factor GTPase superfamily. Classic translation factor GTPase family. PrfC subfamily.</text>
</comment>
<gene>
    <name evidence="1" type="primary">prfC</name>
    <name type="ordered locus">MS1503</name>
</gene>
<protein>
    <recommendedName>
        <fullName evidence="1">Peptide chain release factor 3</fullName>
        <shortName evidence="1">RF-3</shortName>
    </recommendedName>
</protein>
<name>RF3_MANSM</name>
<keyword id="KW-0963">Cytoplasm</keyword>
<keyword id="KW-0342">GTP-binding</keyword>
<keyword id="KW-0547">Nucleotide-binding</keyword>
<keyword id="KW-0648">Protein biosynthesis</keyword>
<feature type="chain" id="PRO_0000242190" description="Peptide chain release factor 3">
    <location>
        <begin position="1"/>
        <end position="529"/>
    </location>
</feature>
<feature type="domain" description="tr-type G">
    <location>
        <begin position="11"/>
        <end position="280"/>
    </location>
</feature>
<feature type="binding site" evidence="1">
    <location>
        <begin position="20"/>
        <end position="27"/>
    </location>
    <ligand>
        <name>GTP</name>
        <dbReference type="ChEBI" id="CHEBI:37565"/>
    </ligand>
</feature>
<feature type="binding site" evidence="1">
    <location>
        <begin position="88"/>
        <end position="92"/>
    </location>
    <ligand>
        <name>GTP</name>
        <dbReference type="ChEBI" id="CHEBI:37565"/>
    </ligand>
</feature>
<feature type="binding site" evidence="1">
    <location>
        <begin position="142"/>
        <end position="145"/>
    </location>
    <ligand>
        <name>GTP</name>
        <dbReference type="ChEBI" id="CHEBI:37565"/>
    </ligand>
</feature>
<organism>
    <name type="scientific">Mannheimia succiniciproducens (strain KCTC 0769BP / MBEL55E)</name>
    <dbReference type="NCBI Taxonomy" id="221988"/>
    <lineage>
        <taxon>Bacteria</taxon>
        <taxon>Pseudomonadati</taxon>
        <taxon>Pseudomonadota</taxon>
        <taxon>Gammaproteobacteria</taxon>
        <taxon>Pasteurellales</taxon>
        <taxon>Pasteurellaceae</taxon>
        <taxon>Basfia</taxon>
    </lineage>
</organism>
<accession>Q65SF0</accession>
<dbReference type="EMBL" id="AE016827">
    <property type="protein sequence ID" value="AAU38110.1"/>
    <property type="molecule type" value="Genomic_DNA"/>
</dbReference>
<dbReference type="RefSeq" id="WP_011200676.1">
    <property type="nucleotide sequence ID" value="NC_006300.1"/>
</dbReference>
<dbReference type="SMR" id="Q65SF0"/>
<dbReference type="STRING" id="221988.MS1503"/>
<dbReference type="KEGG" id="msu:MS1503"/>
<dbReference type="eggNOG" id="COG4108">
    <property type="taxonomic scope" value="Bacteria"/>
</dbReference>
<dbReference type="HOGENOM" id="CLU_002794_2_1_6"/>
<dbReference type="OrthoDB" id="9801472at2"/>
<dbReference type="Proteomes" id="UP000000607">
    <property type="component" value="Chromosome"/>
</dbReference>
<dbReference type="GO" id="GO:0005829">
    <property type="term" value="C:cytosol"/>
    <property type="evidence" value="ECO:0007669"/>
    <property type="project" value="TreeGrafter"/>
</dbReference>
<dbReference type="GO" id="GO:0005525">
    <property type="term" value="F:GTP binding"/>
    <property type="evidence" value="ECO:0007669"/>
    <property type="project" value="UniProtKB-UniRule"/>
</dbReference>
<dbReference type="GO" id="GO:0003924">
    <property type="term" value="F:GTPase activity"/>
    <property type="evidence" value="ECO:0007669"/>
    <property type="project" value="InterPro"/>
</dbReference>
<dbReference type="GO" id="GO:0097216">
    <property type="term" value="F:guanosine tetraphosphate binding"/>
    <property type="evidence" value="ECO:0007669"/>
    <property type="project" value="UniProtKB-ARBA"/>
</dbReference>
<dbReference type="GO" id="GO:0016150">
    <property type="term" value="F:translation release factor activity, codon nonspecific"/>
    <property type="evidence" value="ECO:0007669"/>
    <property type="project" value="TreeGrafter"/>
</dbReference>
<dbReference type="GO" id="GO:0016149">
    <property type="term" value="F:translation release factor activity, codon specific"/>
    <property type="evidence" value="ECO:0007669"/>
    <property type="project" value="UniProtKB-UniRule"/>
</dbReference>
<dbReference type="GO" id="GO:0006449">
    <property type="term" value="P:regulation of translational termination"/>
    <property type="evidence" value="ECO:0007669"/>
    <property type="project" value="UniProtKB-UniRule"/>
</dbReference>
<dbReference type="CDD" id="cd04169">
    <property type="entry name" value="RF3"/>
    <property type="match status" value="1"/>
</dbReference>
<dbReference type="CDD" id="cd03689">
    <property type="entry name" value="RF3_II"/>
    <property type="match status" value="1"/>
</dbReference>
<dbReference type="CDD" id="cd16259">
    <property type="entry name" value="RF3_III"/>
    <property type="match status" value="1"/>
</dbReference>
<dbReference type="FunFam" id="2.40.30.10:FF:000040">
    <property type="entry name" value="Peptide chain release factor 3"/>
    <property type="match status" value="1"/>
</dbReference>
<dbReference type="FunFam" id="3.30.70.3280:FF:000001">
    <property type="entry name" value="Peptide chain release factor 3"/>
    <property type="match status" value="1"/>
</dbReference>
<dbReference type="FunFam" id="3.40.50.300:FF:000542">
    <property type="entry name" value="Peptide chain release factor 3"/>
    <property type="match status" value="1"/>
</dbReference>
<dbReference type="Gene3D" id="3.40.50.300">
    <property type="entry name" value="P-loop containing nucleotide triphosphate hydrolases"/>
    <property type="match status" value="2"/>
</dbReference>
<dbReference type="Gene3D" id="3.30.70.3280">
    <property type="entry name" value="Peptide chain release factor 3, domain III"/>
    <property type="match status" value="1"/>
</dbReference>
<dbReference type="HAMAP" id="MF_00072">
    <property type="entry name" value="Rel_fac_3"/>
    <property type="match status" value="1"/>
</dbReference>
<dbReference type="InterPro" id="IPR053905">
    <property type="entry name" value="EF-G-like_DII"/>
</dbReference>
<dbReference type="InterPro" id="IPR035647">
    <property type="entry name" value="EFG_III/V"/>
</dbReference>
<dbReference type="InterPro" id="IPR031157">
    <property type="entry name" value="G_TR_CS"/>
</dbReference>
<dbReference type="InterPro" id="IPR027417">
    <property type="entry name" value="P-loop_NTPase"/>
</dbReference>
<dbReference type="InterPro" id="IPR004548">
    <property type="entry name" value="PrfC"/>
</dbReference>
<dbReference type="InterPro" id="IPR032090">
    <property type="entry name" value="RF3_C"/>
</dbReference>
<dbReference type="InterPro" id="IPR038467">
    <property type="entry name" value="RF3_dom_3_sf"/>
</dbReference>
<dbReference type="InterPro" id="IPR041732">
    <property type="entry name" value="RF3_GTP-bd"/>
</dbReference>
<dbReference type="InterPro" id="IPR005225">
    <property type="entry name" value="Small_GTP-bd"/>
</dbReference>
<dbReference type="InterPro" id="IPR000795">
    <property type="entry name" value="T_Tr_GTP-bd_dom"/>
</dbReference>
<dbReference type="InterPro" id="IPR009000">
    <property type="entry name" value="Transl_B-barrel_sf"/>
</dbReference>
<dbReference type="NCBIfam" id="TIGR00503">
    <property type="entry name" value="prfC"/>
    <property type="match status" value="1"/>
</dbReference>
<dbReference type="NCBIfam" id="NF001964">
    <property type="entry name" value="PRK00741.1"/>
    <property type="match status" value="1"/>
</dbReference>
<dbReference type="NCBIfam" id="TIGR00231">
    <property type="entry name" value="small_GTP"/>
    <property type="match status" value="1"/>
</dbReference>
<dbReference type="PANTHER" id="PTHR43556">
    <property type="entry name" value="PEPTIDE CHAIN RELEASE FACTOR RF3"/>
    <property type="match status" value="1"/>
</dbReference>
<dbReference type="PANTHER" id="PTHR43556:SF2">
    <property type="entry name" value="PEPTIDE CHAIN RELEASE FACTOR RF3"/>
    <property type="match status" value="1"/>
</dbReference>
<dbReference type="Pfam" id="PF22042">
    <property type="entry name" value="EF-G_D2"/>
    <property type="match status" value="1"/>
</dbReference>
<dbReference type="Pfam" id="PF00009">
    <property type="entry name" value="GTP_EFTU"/>
    <property type="match status" value="1"/>
</dbReference>
<dbReference type="Pfam" id="PF16658">
    <property type="entry name" value="RF3_C"/>
    <property type="match status" value="1"/>
</dbReference>
<dbReference type="PRINTS" id="PR00315">
    <property type="entry name" value="ELONGATNFCT"/>
</dbReference>
<dbReference type="SUPFAM" id="SSF54980">
    <property type="entry name" value="EF-G C-terminal domain-like"/>
    <property type="match status" value="1"/>
</dbReference>
<dbReference type="SUPFAM" id="SSF52540">
    <property type="entry name" value="P-loop containing nucleoside triphosphate hydrolases"/>
    <property type="match status" value="1"/>
</dbReference>
<dbReference type="SUPFAM" id="SSF50447">
    <property type="entry name" value="Translation proteins"/>
    <property type="match status" value="1"/>
</dbReference>
<dbReference type="PROSITE" id="PS00301">
    <property type="entry name" value="G_TR_1"/>
    <property type="match status" value="1"/>
</dbReference>
<dbReference type="PROSITE" id="PS51722">
    <property type="entry name" value="G_TR_2"/>
    <property type="match status" value="1"/>
</dbReference>